<organismHost>
    <name type="scientific">Acanthamoeba polyphaga</name>
    <name type="common">Amoeba</name>
    <dbReference type="NCBI Taxonomy" id="5757"/>
</organismHost>
<comment type="function">
    <text evidence="1">Sliding clamp subunit. Responsible for tethering the catalytic subunit of DNA polymerase to DNA during high-speed replication (By similarity).</text>
</comment>
<comment type="similarity">
    <text evidence="3">Belongs to the PCNA family.</text>
</comment>
<protein>
    <recommendedName>
        <fullName>Probable DNA polymerase sliding clamp</fullName>
    </recommendedName>
    <alternativeName>
        <fullName>Proliferating cell nuclear antigen homolog</fullName>
        <shortName>PCNA</shortName>
    </alternativeName>
</protein>
<keyword id="KW-0235">DNA replication</keyword>
<keyword id="KW-0238">DNA-binding</keyword>
<keyword id="KW-1185">Reference proteome</keyword>
<sequence>MSKKTGTKTSKSGSKKSNKDVEKLVDDEDIQDLSDKKNKISQSKNLVKNNKSSKNSKSSKSVKSTKTSTKTSLKKQVKTPPKKQTKTSSKKNKKDESDDDVTDNSDISDDDNTGNSDISDDENDQEEDNDISSDEEETETRQKSSGKKGNVNKDVGSSRKLKTDKNARNDNKVLEIRTTQTGALKQVFERVSGVISDCCLTFMPADKDINNAGDDNEYYEDESTKSSHKQSKTTDRPKNTGGIRIIRLTEDNNTLVKVVLEAANFEYFRCDEPKITVGVDMHTLHSHLKMINDDDPIVIYMKKDIQGSLYIRSLSENNDNSEEREIELFLMDIINPEIPVPKTEFQNRITMKSDKFHLICKHLSQNSTFVEITSINNEILFKGQSEGGKVTMTYKDTGYKKKEKPDQVIQGVYELRNLLGFSKCNKLCNTIEIYLKNDFPLVLVISVATLGKMYVFLSPIDNGN</sequence>
<evidence type="ECO:0000250" key="1"/>
<evidence type="ECO:0000256" key="2">
    <source>
        <dbReference type="SAM" id="MobiDB-lite"/>
    </source>
</evidence>
<evidence type="ECO:0000305" key="3"/>
<proteinExistence type="inferred from homology"/>
<gene>
    <name type="primary">PCNA</name>
    <name type="ordered locus">MIMI_R493</name>
</gene>
<organism>
    <name type="scientific">Acanthamoeba polyphaga mimivirus</name>
    <name type="common">APMV</name>
    <dbReference type="NCBI Taxonomy" id="212035"/>
    <lineage>
        <taxon>Viruses</taxon>
        <taxon>Varidnaviria</taxon>
        <taxon>Bamfordvirae</taxon>
        <taxon>Nucleocytoviricota</taxon>
        <taxon>Megaviricetes</taxon>
        <taxon>Imitervirales</taxon>
        <taxon>Mimiviridae</taxon>
        <taxon>Megamimivirinae</taxon>
        <taxon>Mimivirus</taxon>
        <taxon>Mimivirus bradfordmassiliense</taxon>
    </lineage>
</organism>
<dbReference type="EMBL" id="AY653733">
    <property type="protein sequence ID" value="AAQ09580.2"/>
    <property type="molecule type" value="Genomic_DNA"/>
</dbReference>
<dbReference type="SMR" id="Q7T6Y0"/>
<dbReference type="KEGG" id="vg:9925123"/>
<dbReference type="OrthoDB" id="8928at10239"/>
<dbReference type="Proteomes" id="UP000001134">
    <property type="component" value="Genome"/>
</dbReference>
<dbReference type="GO" id="GO:0003677">
    <property type="term" value="F:DNA binding"/>
    <property type="evidence" value="ECO:0007669"/>
    <property type="project" value="UniProtKB-KW"/>
</dbReference>
<dbReference type="GO" id="GO:0030337">
    <property type="term" value="F:DNA polymerase processivity factor activity"/>
    <property type="evidence" value="ECO:0007669"/>
    <property type="project" value="InterPro"/>
</dbReference>
<dbReference type="GO" id="GO:0006272">
    <property type="term" value="P:leading strand elongation"/>
    <property type="evidence" value="ECO:0007669"/>
    <property type="project" value="TreeGrafter"/>
</dbReference>
<dbReference type="GO" id="GO:0006275">
    <property type="term" value="P:regulation of DNA replication"/>
    <property type="evidence" value="ECO:0007669"/>
    <property type="project" value="InterPro"/>
</dbReference>
<dbReference type="CDD" id="cd00577">
    <property type="entry name" value="PCNA"/>
    <property type="match status" value="1"/>
</dbReference>
<dbReference type="Gene3D" id="3.70.10.10">
    <property type="match status" value="1"/>
</dbReference>
<dbReference type="InterPro" id="IPR046938">
    <property type="entry name" value="DNA_clamp_sf"/>
</dbReference>
<dbReference type="InterPro" id="IPR000730">
    <property type="entry name" value="Pr_cel_nuc_antig"/>
</dbReference>
<dbReference type="InterPro" id="IPR022649">
    <property type="entry name" value="Pr_cel_nuc_antig_C"/>
</dbReference>
<dbReference type="InterPro" id="IPR022648">
    <property type="entry name" value="Pr_cel_nuc_antig_N"/>
</dbReference>
<dbReference type="PANTHER" id="PTHR11352">
    <property type="entry name" value="PROLIFERATING CELL NUCLEAR ANTIGEN"/>
    <property type="match status" value="1"/>
</dbReference>
<dbReference type="PANTHER" id="PTHR11352:SF0">
    <property type="entry name" value="PROLIFERATING CELL NUCLEAR ANTIGEN"/>
    <property type="match status" value="1"/>
</dbReference>
<dbReference type="Pfam" id="PF02747">
    <property type="entry name" value="PCNA_C"/>
    <property type="match status" value="1"/>
</dbReference>
<dbReference type="Pfam" id="PF00705">
    <property type="entry name" value="PCNA_N"/>
    <property type="match status" value="1"/>
</dbReference>
<dbReference type="SUPFAM" id="SSF55979">
    <property type="entry name" value="DNA clamp"/>
    <property type="match status" value="2"/>
</dbReference>
<name>PCNA_MIMIV</name>
<reference key="1">
    <citation type="journal article" date="2004" name="Science">
        <title>The 1.2-megabase genome sequence of Mimivirus.</title>
        <authorList>
            <person name="Raoult D."/>
            <person name="Audic S."/>
            <person name="Robert C."/>
            <person name="Abergel C."/>
            <person name="Renesto P."/>
            <person name="Ogata H."/>
            <person name="La Scola B."/>
            <person name="Susan M."/>
            <person name="Claverie J.-M."/>
        </authorList>
    </citation>
    <scope>NUCLEOTIDE SEQUENCE [LARGE SCALE GENOMIC DNA]</scope>
    <source>
        <strain>Rowbotham-Bradford</strain>
    </source>
</reference>
<accession>Q7T6Y0</accession>
<feature type="chain" id="PRO_0000149225" description="Probable DNA polymerase sliding clamp">
    <location>
        <begin position="1"/>
        <end position="464"/>
    </location>
</feature>
<feature type="region of interest" description="Disordered" evidence="2">
    <location>
        <begin position="1"/>
        <end position="168"/>
    </location>
</feature>
<feature type="region of interest" description="Disordered" evidence="2">
    <location>
        <begin position="210"/>
        <end position="239"/>
    </location>
</feature>
<feature type="compositionally biased region" description="Low complexity" evidence="2">
    <location>
        <begin position="41"/>
        <end position="71"/>
    </location>
</feature>
<feature type="compositionally biased region" description="Basic residues" evidence="2">
    <location>
        <begin position="72"/>
        <end position="92"/>
    </location>
</feature>
<feature type="compositionally biased region" description="Acidic residues" evidence="2">
    <location>
        <begin position="97"/>
        <end position="138"/>
    </location>
</feature>